<comment type="function">
    <text evidence="1">Is the main repressor of the genes involved in the de novo synthesis of purine nucleotides, regulating purB, purC, purEK, purF, purHD, purL, purMN and guaBA expression. PurR is allosterically activated to bind its cognate DNA by binding the purine corepressors, hypoxanthine or guanine, thereby effecting transcription repression.</text>
</comment>
<comment type="pathway">
    <text>Purine metabolism; purine nucleotide biosynthesis [regulation].</text>
</comment>
<comment type="subunit">
    <text evidence="1">Homodimer.</text>
</comment>
<comment type="domain">
    <text evidence="1">Consists of two structural and functional domains: an N-terminal DNA-binding domain, approximately the first 60 residues, and a larger C-terminal domain, approximately 280 residues, which imparts the function of corepressor binding and oligomerization.</text>
</comment>
<keyword id="KW-0238">DNA-binding</keyword>
<keyword id="KW-0658">Purine biosynthesis</keyword>
<keyword id="KW-0678">Repressor</keyword>
<keyword id="KW-0804">Transcription</keyword>
<keyword id="KW-0805">Transcription regulation</keyword>
<organism>
    <name type="scientific">Yersinia pestis bv. Antiqua (strain Angola)</name>
    <dbReference type="NCBI Taxonomy" id="349746"/>
    <lineage>
        <taxon>Bacteria</taxon>
        <taxon>Pseudomonadati</taxon>
        <taxon>Pseudomonadota</taxon>
        <taxon>Gammaproteobacteria</taxon>
        <taxon>Enterobacterales</taxon>
        <taxon>Yersiniaceae</taxon>
        <taxon>Yersinia</taxon>
    </lineage>
</organism>
<evidence type="ECO:0000255" key="1">
    <source>
        <dbReference type="HAMAP-Rule" id="MF_01277"/>
    </source>
</evidence>
<feature type="chain" id="PRO_1000140308" description="HTH-type transcriptional repressor PurR">
    <location>
        <begin position="1"/>
        <end position="341"/>
    </location>
</feature>
<feature type="domain" description="HTH lacI-type" evidence="1">
    <location>
        <begin position="2"/>
        <end position="56"/>
    </location>
</feature>
<feature type="DNA-binding region" description="H-T-H motif" evidence="1">
    <location>
        <begin position="4"/>
        <end position="23"/>
    </location>
</feature>
<feature type="DNA-binding region" evidence="1">
    <location>
        <begin position="48"/>
        <end position="56"/>
    </location>
</feature>
<feature type="binding site" evidence="1">
    <location>
        <position position="73"/>
    </location>
    <ligand>
        <name>hypoxanthine</name>
        <dbReference type="ChEBI" id="CHEBI:17368"/>
    </ligand>
</feature>
<feature type="binding site" evidence="1">
    <location>
        <position position="190"/>
    </location>
    <ligand>
        <name>hypoxanthine</name>
        <dbReference type="ChEBI" id="CHEBI:17368"/>
    </ligand>
</feature>
<feature type="binding site" evidence="1">
    <location>
        <position position="192"/>
    </location>
    <ligand>
        <name>hypoxanthine</name>
        <dbReference type="ChEBI" id="CHEBI:17368"/>
    </ligand>
</feature>
<feature type="binding site" evidence="1">
    <location>
        <position position="221"/>
    </location>
    <ligand>
        <name>hypoxanthine</name>
        <dbReference type="ChEBI" id="CHEBI:17368"/>
    </ligand>
</feature>
<feature type="binding site" evidence="1">
    <location>
        <position position="275"/>
    </location>
    <ligand>
        <name>hypoxanthine</name>
        <dbReference type="ChEBI" id="CHEBI:17368"/>
    </ligand>
</feature>
<reference key="1">
    <citation type="journal article" date="2010" name="J. Bacteriol.">
        <title>Genome sequence of the deep-rooted Yersinia pestis strain Angola reveals new insights into the evolution and pangenome of the plague bacterium.</title>
        <authorList>
            <person name="Eppinger M."/>
            <person name="Worsham P.L."/>
            <person name="Nikolich M.P."/>
            <person name="Riley D.R."/>
            <person name="Sebastian Y."/>
            <person name="Mou S."/>
            <person name="Achtman M."/>
            <person name="Lindler L.E."/>
            <person name="Ravel J."/>
        </authorList>
    </citation>
    <scope>NUCLEOTIDE SEQUENCE [LARGE SCALE GENOMIC DNA]</scope>
    <source>
        <strain>Angola</strain>
    </source>
</reference>
<proteinExistence type="inferred from homology"/>
<protein>
    <recommendedName>
        <fullName evidence="1">HTH-type transcriptional repressor PurR</fullName>
    </recommendedName>
    <alternativeName>
        <fullName evidence="1">Pur regulon repressor</fullName>
    </alternativeName>
    <alternativeName>
        <fullName evidence="1">Purine nucleotide synthesis repressor</fullName>
    </alternativeName>
</protein>
<gene>
    <name evidence="1" type="primary">purR</name>
    <name type="ordered locus">YpAngola_A2572</name>
</gene>
<dbReference type="EMBL" id="CP000901">
    <property type="protein sequence ID" value="ABX86565.1"/>
    <property type="molecule type" value="Genomic_DNA"/>
</dbReference>
<dbReference type="RefSeq" id="WP_002210943.1">
    <property type="nucleotide sequence ID" value="NZ_CP009935.1"/>
</dbReference>
<dbReference type="SMR" id="A9QZB3"/>
<dbReference type="GeneID" id="57976289"/>
<dbReference type="KEGG" id="ypg:YpAngola_A2572"/>
<dbReference type="PATRIC" id="fig|349746.12.peg.3598"/>
<dbReference type="UniPathway" id="UPA00488"/>
<dbReference type="GO" id="GO:0003700">
    <property type="term" value="F:DNA-binding transcription factor activity"/>
    <property type="evidence" value="ECO:0007669"/>
    <property type="project" value="TreeGrafter"/>
</dbReference>
<dbReference type="GO" id="GO:0000976">
    <property type="term" value="F:transcription cis-regulatory region binding"/>
    <property type="evidence" value="ECO:0007669"/>
    <property type="project" value="TreeGrafter"/>
</dbReference>
<dbReference type="GO" id="GO:0045892">
    <property type="term" value="P:negative regulation of DNA-templated transcription"/>
    <property type="evidence" value="ECO:0007669"/>
    <property type="project" value="UniProtKB-UniRule"/>
</dbReference>
<dbReference type="GO" id="GO:0006164">
    <property type="term" value="P:purine nucleotide biosynthetic process"/>
    <property type="evidence" value="ECO:0007669"/>
    <property type="project" value="UniProtKB-UniPathway"/>
</dbReference>
<dbReference type="CDD" id="cd01392">
    <property type="entry name" value="HTH_LacI"/>
    <property type="match status" value="1"/>
</dbReference>
<dbReference type="CDD" id="cd06275">
    <property type="entry name" value="PBP1_PurR"/>
    <property type="match status" value="1"/>
</dbReference>
<dbReference type="FunFam" id="1.10.260.40:FF:000002">
    <property type="entry name" value="HTH-type transcriptional repressor PurR"/>
    <property type="match status" value="1"/>
</dbReference>
<dbReference type="FunFam" id="3.40.50.2300:FF:000045">
    <property type="entry name" value="HTH-type transcriptional repressor PurR"/>
    <property type="match status" value="1"/>
</dbReference>
<dbReference type="Gene3D" id="3.40.50.2300">
    <property type="match status" value="2"/>
</dbReference>
<dbReference type="Gene3D" id="1.10.260.40">
    <property type="entry name" value="lambda repressor-like DNA-binding domains"/>
    <property type="match status" value="1"/>
</dbReference>
<dbReference type="HAMAP" id="MF_01277">
    <property type="entry name" value="HTH_type_PurR"/>
    <property type="match status" value="1"/>
</dbReference>
<dbReference type="InterPro" id="IPR000843">
    <property type="entry name" value="HTH_LacI"/>
</dbReference>
<dbReference type="InterPro" id="IPR046335">
    <property type="entry name" value="LacI/GalR-like_sensor"/>
</dbReference>
<dbReference type="InterPro" id="IPR010982">
    <property type="entry name" value="Lambda_DNA-bd_dom_sf"/>
</dbReference>
<dbReference type="InterPro" id="IPR028082">
    <property type="entry name" value="Peripla_BP_I"/>
</dbReference>
<dbReference type="InterPro" id="IPR023588">
    <property type="entry name" value="Tscrpt_reg_HTH_PurR"/>
</dbReference>
<dbReference type="NCBIfam" id="NF007979">
    <property type="entry name" value="PRK10703.1"/>
    <property type="match status" value="1"/>
</dbReference>
<dbReference type="PANTHER" id="PTHR30146:SF148">
    <property type="entry name" value="HTH-TYPE TRANSCRIPTIONAL REPRESSOR PURR-RELATED"/>
    <property type="match status" value="1"/>
</dbReference>
<dbReference type="PANTHER" id="PTHR30146">
    <property type="entry name" value="LACI-RELATED TRANSCRIPTIONAL REPRESSOR"/>
    <property type="match status" value="1"/>
</dbReference>
<dbReference type="Pfam" id="PF00356">
    <property type="entry name" value="LacI"/>
    <property type="match status" value="1"/>
</dbReference>
<dbReference type="Pfam" id="PF13377">
    <property type="entry name" value="Peripla_BP_3"/>
    <property type="match status" value="1"/>
</dbReference>
<dbReference type="PRINTS" id="PR00036">
    <property type="entry name" value="HTHLACI"/>
</dbReference>
<dbReference type="SMART" id="SM00354">
    <property type="entry name" value="HTH_LACI"/>
    <property type="match status" value="1"/>
</dbReference>
<dbReference type="SUPFAM" id="SSF47413">
    <property type="entry name" value="lambda repressor-like DNA-binding domains"/>
    <property type="match status" value="1"/>
</dbReference>
<dbReference type="SUPFAM" id="SSF53822">
    <property type="entry name" value="Periplasmic binding protein-like I"/>
    <property type="match status" value="1"/>
</dbReference>
<dbReference type="PROSITE" id="PS00356">
    <property type="entry name" value="HTH_LACI_1"/>
    <property type="match status" value="1"/>
</dbReference>
<dbReference type="PROSITE" id="PS50932">
    <property type="entry name" value="HTH_LACI_2"/>
    <property type="match status" value="1"/>
</dbReference>
<sequence>MATIKDVAKHAGVSTTTVSHVINKTRFVAENTKAAVWAAIKELHYSPSAVARSLKVNHTKSIGLLATSSEAPYFAEVIEAVENSCYSKGYTLILCNSHNNLDKQKAYLAMLAQKRVDGLLVMCSEYPDQLLGMLEDYRNIPMVVMDWGTARGDFTDSIIDNAFEGGYLAGRYLIERGHRDIGAIPGQLARNTGGGRHQGFLKALEEANIPVREEWIVQGDFEPESGYKAMHQILTQKHRPTAVFCGGDIMAMGAICAADELGLRVPQDISVIGYDNVRNARYFSPALTTIHQPKERLGETAFAMLLDRIVSKREDPQTIEVHPKLVERRSVADGPFRDYRR</sequence>
<name>PURR_YERPG</name>
<accession>A9QZB3</accession>